<protein>
    <recommendedName>
        <fullName evidence="1">5'-deoxynucleotidase YfbR</fullName>
        <ecNumber evidence="1">3.1.3.89</ecNumber>
    </recommendedName>
    <alternativeName>
        <fullName evidence="1">5'-deoxyribonucleotidase</fullName>
    </alternativeName>
    <alternativeName>
        <fullName evidence="1">Nucleoside 5'-monophosphate phosphohydrolase</fullName>
    </alternativeName>
</protein>
<feature type="chain" id="PRO_1000064951" description="5'-deoxynucleotidase YfbR">
    <location>
        <begin position="1"/>
        <end position="199"/>
    </location>
</feature>
<feature type="domain" description="HD" evidence="2">
    <location>
        <begin position="30"/>
        <end position="142"/>
    </location>
</feature>
<feature type="binding site" evidence="1">
    <location>
        <begin position="18"/>
        <end position="19"/>
    </location>
    <ligand>
        <name>substrate</name>
    </ligand>
</feature>
<feature type="binding site" evidence="1">
    <location>
        <position position="33"/>
    </location>
    <ligand>
        <name>a divalent metal cation</name>
        <dbReference type="ChEBI" id="CHEBI:60240"/>
    </ligand>
</feature>
<feature type="binding site" evidence="1">
    <location>
        <position position="33"/>
    </location>
    <ligand>
        <name>substrate</name>
    </ligand>
</feature>
<feature type="binding site" evidence="1">
    <location>
        <position position="68"/>
    </location>
    <ligand>
        <name>a divalent metal cation</name>
        <dbReference type="ChEBI" id="CHEBI:60240"/>
    </ligand>
</feature>
<feature type="binding site" evidence="1">
    <location>
        <position position="69"/>
    </location>
    <ligand>
        <name>a divalent metal cation</name>
        <dbReference type="ChEBI" id="CHEBI:60240"/>
    </ligand>
</feature>
<feature type="binding site" evidence="1">
    <location>
        <position position="69"/>
    </location>
    <ligand>
        <name>substrate</name>
    </ligand>
</feature>
<feature type="binding site" evidence="1">
    <location>
        <begin position="77"/>
        <end position="80"/>
    </location>
    <ligand>
        <name>substrate</name>
    </ligand>
</feature>
<feature type="binding site" evidence="1">
    <location>
        <position position="137"/>
    </location>
    <ligand>
        <name>a divalent metal cation</name>
        <dbReference type="ChEBI" id="CHEBI:60240"/>
    </ligand>
</feature>
<feature type="binding site" evidence="1">
    <location>
        <position position="137"/>
    </location>
    <ligand>
        <name>substrate</name>
    </ligand>
</feature>
<feature type="site" description="Appears to be important in orienting the phosphate for catalysis" evidence="1">
    <location>
        <position position="18"/>
    </location>
</feature>
<reference key="1">
    <citation type="journal article" date="2006" name="Mol. Microbiol.">
        <title>Role of pathogenicity island-associated integrases in the genome plasticity of uropathogenic Escherichia coli strain 536.</title>
        <authorList>
            <person name="Hochhut B."/>
            <person name="Wilde C."/>
            <person name="Balling G."/>
            <person name="Middendorf B."/>
            <person name="Dobrindt U."/>
            <person name="Brzuszkiewicz E."/>
            <person name="Gottschalk G."/>
            <person name="Carniel E."/>
            <person name="Hacker J."/>
        </authorList>
    </citation>
    <scope>NUCLEOTIDE SEQUENCE [LARGE SCALE GENOMIC DNA]</scope>
    <source>
        <strain>536 / UPEC</strain>
    </source>
</reference>
<name>5DNU_ECOL5</name>
<dbReference type="EC" id="3.1.3.89" evidence="1"/>
<dbReference type="EMBL" id="CP000247">
    <property type="protein sequence ID" value="ABG70324.1"/>
    <property type="molecule type" value="Genomic_DNA"/>
</dbReference>
<dbReference type="RefSeq" id="WP_000813854.1">
    <property type="nucleotide sequence ID" value="NC_008253.1"/>
</dbReference>
<dbReference type="SMR" id="Q0TFF5"/>
<dbReference type="KEGG" id="ecp:ECP_2330"/>
<dbReference type="HOGENOM" id="CLU_084784_0_0_6"/>
<dbReference type="Proteomes" id="UP000009182">
    <property type="component" value="Chromosome"/>
</dbReference>
<dbReference type="GO" id="GO:0005737">
    <property type="term" value="C:cytoplasm"/>
    <property type="evidence" value="ECO:0007669"/>
    <property type="project" value="UniProtKB-SubCell"/>
</dbReference>
<dbReference type="GO" id="GO:0002953">
    <property type="term" value="F:5'-deoxynucleotidase activity"/>
    <property type="evidence" value="ECO:0007669"/>
    <property type="project" value="UniProtKB-EC"/>
</dbReference>
<dbReference type="GO" id="GO:0046872">
    <property type="term" value="F:metal ion binding"/>
    <property type="evidence" value="ECO:0007669"/>
    <property type="project" value="UniProtKB-KW"/>
</dbReference>
<dbReference type="GO" id="GO:0000166">
    <property type="term" value="F:nucleotide binding"/>
    <property type="evidence" value="ECO:0007669"/>
    <property type="project" value="UniProtKB-KW"/>
</dbReference>
<dbReference type="CDD" id="cd00077">
    <property type="entry name" value="HDc"/>
    <property type="match status" value="1"/>
</dbReference>
<dbReference type="FunFam" id="1.10.3210.10:FF:000002">
    <property type="entry name" value="Nucleotidase YfbR"/>
    <property type="match status" value="1"/>
</dbReference>
<dbReference type="Gene3D" id="1.10.3210.10">
    <property type="entry name" value="Hypothetical protein af1432"/>
    <property type="match status" value="1"/>
</dbReference>
<dbReference type="HAMAP" id="MF_01100">
    <property type="entry name" value="5DNU"/>
    <property type="match status" value="1"/>
</dbReference>
<dbReference type="InterPro" id="IPR003607">
    <property type="entry name" value="HD/PDEase_dom"/>
</dbReference>
<dbReference type="InterPro" id="IPR006674">
    <property type="entry name" value="HD_domain"/>
</dbReference>
<dbReference type="InterPro" id="IPR022971">
    <property type="entry name" value="YfbR"/>
</dbReference>
<dbReference type="InterPro" id="IPR039356">
    <property type="entry name" value="YfbR/HDDC2"/>
</dbReference>
<dbReference type="NCBIfam" id="NF003009">
    <property type="entry name" value="PRK03826.1"/>
    <property type="match status" value="1"/>
</dbReference>
<dbReference type="PANTHER" id="PTHR11845">
    <property type="entry name" value="5'-DEOXYNUCLEOTIDASE HDDC2"/>
    <property type="match status" value="1"/>
</dbReference>
<dbReference type="PANTHER" id="PTHR11845:SF13">
    <property type="entry name" value="5'-DEOXYNUCLEOTIDASE HDDC2"/>
    <property type="match status" value="1"/>
</dbReference>
<dbReference type="Pfam" id="PF12917">
    <property type="entry name" value="YfbR-like"/>
    <property type="match status" value="1"/>
</dbReference>
<dbReference type="SMART" id="SM00471">
    <property type="entry name" value="HDc"/>
    <property type="match status" value="1"/>
</dbReference>
<dbReference type="SUPFAM" id="SSF109604">
    <property type="entry name" value="HD-domain/PDEase-like"/>
    <property type="match status" value="1"/>
</dbReference>
<dbReference type="PROSITE" id="PS51831">
    <property type="entry name" value="HD"/>
    <property type="match status" value="1"/>
</dbReference>
<gene>
    <name evidence="1" type="primary">yfbR</name>
    <name type="ordered locus">ECP_2330</name>
</gene>
<sequence length="199" mass="22666">MKQSHFFAHLSRLKLINRWPLMRNVRTENVSEHSLQVAMVAHALAAIKNRKFGGNVNAERIALLAMYHDASEVLTGDLPTPVKYFNSQIAQEYKAIEKIAQQKLVDMVPEELQDIFAPLIDEHAYSDEEKSLVKQADALCAYLKCLEELAAGNNEFLLAKTRLEATLEARRSQEMDYFMEVFVPSFHLSLDEISQDSPL</sequence>
<comment type="function">
    <text evidence="1">Catalyzes the strictly specific dephosphorylation of 2'-deoxyribonucleoside 5'-monophosphates.</text>
</comment>
<comment type="catalytic activity">
    <reaction evidence="1">
        <text>a 2'-deoxyribonucleoside 5'-phosphate + H2O = a 2'-deoxyribonucleoside + phosphate</text>
        <dbReference type="Rhea" id="RHEA:36167"/>
        <dbReference type="ChEBI" id="CHEBI:15377"/>
        <dbReference type="ChEBI" id="CHEBI:18274"/>
        <dbReference type="ChEBI" id="CHEBI:43474"/>
        <dbReference type="ChEBI" id="CHEBI:65317"/>
        <dbReference type="EC" id="3.1.3.89"/>
    </reaction>
</comment>
<comment type="cofactor">
    <cofactor evidence="1">
        <name>a divalent metal cation</name>
        <dbReference type="ChEBI" id="CHEBI:60240"/>
    </cofactor>
</comment>
<comment type="subunit">
    <text evidence="1">Homodimer.</text>
</comment>
<comment type="subcellular location">
    <subcellularLocation>
        <location evidence="1">Cytoplasm</location>
    </subcellularLocation>
</comment>
<comment type="similarity">
    <text evidence="1">Belongs to the 5DNU family.</text>
</comment>
<proteinExistence type="inferred from homology"/>
<organism>
    <name type="scientific">Escherichia coli O6:K15:H31 (strain 536 / UPEC)</name>
    <dbReference type="NCBI Taxonomy" id="362663"/>
    <lineage>
        <taxon>Bacteria</taxon>
        <taxon>Pseudomonadati</taxon>
        <taxon>Pseudomonadota</taxon>
        <taxon>Gammaproteobacteria</taxon>
        <taxon>Enterobacterales</taxon>
        <taxon>Enterobacteriaceae</taxon>
        <taxon>Escherichia</taxon>
    </lineage>
</organism>
<evidence type="ECO:0000255" key="1">
    <source>
        <dbReference type="HAMAP-Rule" id="MF_01100"/>
    </source>
</evidence>
<evidence type="ECO:0000255" key="2">
    <source>
        <dbReference type="PROSITE-ProRule" id="PRU01175"/>
    </source>
</evidence>
<accession>Q0TFF5</accession>
<keyword id="KW-0963">Cytoplasm</keyword>
<keyword id="KW-0378">Hydrolase</keyword>
<keyword id="KW-0479">Metal-binding</keyword>
<keyword id="KW-0547">Nucleotide-binding</keyword>